<name>DEOB_EXIS2</name>
<evidence type="ECO:0000255" key="1">
    <source>
        <dbReference type="HAMAP-Rule" id="MF_00740"/>
    </source>
</evidence>
<gene>
    <name evidence="1" type="primary">deoB</name>
    <name type="ordered locus">Exig_1002</name>
</gene>
<feature type="chain" id="PRO_1000133079" description="Phosphopentomutase">
    <location>
        <begin position="1"/>
        <end position="390"/>
    </location>
</feature>
<feature type="binding site" evidence="1">
    <location>
        <position position="14"/>
    </location>
    <ligand>
        <name>Mn(2+)</name>
        <dbReference type="ChEBI" id="CHEBI:29035"/>
        <label>1</label>
    </ligand>
</feature>
<feature type="binding site" evidence="1">
    <location>
        <position position="286"/>
    </location>
    <ligand>
        <name>Mn(2+)</name>
        <dbReference type="ChEBI" id="CHEBI:29035"/>
        <label>2</label>
    </ligand>
</feature>
<feature type="binding site" evidence="1">
    <location>
        <position position="291"/>
    </location>
    <ligand>
        <name>Mn(2+)</name>
        <dbReference type="ChEBI" id="CHEBI:29035"/>
        <label>2</label>
    </ligand>
</feature>
<feature type="binding site" evidence="1">
    <location>
        <position position="327"/>
    </location>
    <ligand>
        <name>Mn(2+)</name>
        <dbReference type="ChEBI" id="CHEBI:29035"/>
        <label>1</label>
    </ligand>
</feature>
<feature type="binding site" evidence="1">
    <location>
        <position position="328"/>
    </location>
    <ligand>
        <name>Mn(2+)</name>
        <dbReference type="ChEBI" id="CHEBI:29035"/>
        <label>1</label>
    </ligand>
</feature>
<feature type="binding site" evidence="1">
    <location>
        <position position="339"/>
    </location>
    <ligand>
        <name>Mn(2+)</name>
        <dbReference type="ChEBI" id="CHEBI:29035"/>
        <label>2</label>
    </ligand>
</feature>
<proteinExistence type="inferred from homology"/>
<comment type="function">
    <text evidence="1">Isomerase that catalyzes the conversion of deoxy-ribose 1-phosphate (dRib-1-P) and ribose 1-phosphate (Rib-1-P) to deoxy-ribose 5-phosphate (dRib-5-P) and ribose 5-phosphate (Rib-5-P), respectively.</text>
</comment>
<comment type="catalytic activity">
    <reaction evidence="1">
        <text>2-deoxy-alpha-D-ribose 1-phosphate = 2-deoxy-D-ribose 5-phosphate</text>
        <dbReference type="Rhea" id="RHEA:27658"/>
        <dbReference type="ChEBI" id="CHEBI:57259"/>
        <dbReference type="ChEBI" id="CHEBI:62877"/>
        <dbReference type="EC" id="5.4.2.7"/>
    </reaction>
</comment>
<comment type="catalytic activity">
    <reaction evidence="1">
        <text>alpha-D-ribose 1-phosphate = D-ribose 5-phosphate</text>
        <dbReference type="Rhea" id="RHEA:18793"/>
        <dbReference type="ChEBI" id="CHEBI:57720"/>
        <dbReference type="ChEBI" id="CHEBI:78346"/>
        <dbReference type="EC" id="5.4.2.7"/>
    </reaction>
</comment>
<comment type="cofactor">
    <cofactor evidence="1">
        <name>Mn(2+)</name>
        <dbReference type="ChEBI" id="CHEBI:29035"/>
    </cofactor>
    <text evidence="1">Binds 2 manganese ions.</text>
</comment>
<comment type="pathway">
    <text evidence="1">Carbohydrate degradation; 2-deoxy-D-ribose 1-phosphate degradation; D-glyceraldehyde 3-phosphate and acetaldehyde from 2-deoxy-alpha-D-ribose 1-phosphate: step 1/2.</text>
</comment>
<comment type="subcellular location">
    <subcellularLocation>
        <location evidence="1">Cytoplasm</location>
    </subcellularLocation>
</comment>
<comment type="similarity">
    <text evidence="1">Belongs to the phosphopentomutase family.</text>
</comment>
<sequence length="390" mass="43032">MAQSFKRVFLVVMDSVGIGEAPDAEQFGDLGAHTLGHIAEQRNGLNMPHLAQLGLSHIEPVQGVSADAAPIASFGKMEEVSAGKDTMTGHWEIMGLRIDTPFRVFEKFPEDLIGRLETFSGRKIIGNKPASGTEILDELGQEHVDTGALIVYTSADSVLQIAAHEEVVPLEELYRICEYARDITRDDPYMLGRIIARPFLGEQGAWVRTSNRHDYALKPFDRTVMNELETAGLDVISLGKIADIFDGEGVTDAIRTKSNMDGMDQLVKQLDRDFTGLCFLNLVDFDALFGHRRDPQGYGQALEEFDARLLEVFERLQEDDLLIITADHGNDPVHPGTDHTREYVPLLVYSKSGAAKDLGIRSTFADLGATVADNFNVKMPAHGKSFLSEL</sequence>
<reference key="1">
    <citation type="submission" date="2008-04" db="EMBL/GenBank/DDBJ databases">
        <title>Complete sequence of chromosome of Exiguobacterium sibiricum 255-15.</title>
        <authorList>
            <consortium name="US DOE Joint Genome Institute"/>
            <person name="Copeland A."/>
            <person name="Lucas S."/>
            <person name="Lapidus A."/>
            <person name="Glavina del Rio T."/>
            <person name="Dalin E."/>
            <person name="Tice H."/>
            <person name="Bruce D."/>
            <person name="Goodwin L."/>
            <person name="Pitluck S."/>
            <person name="Kiss H."/>
            <person name="Chertkov O."/>
            <person name="Monk C."/>
            <person name="Brettin T."/>
            <person name="Detter J.C."/>
            <person name="Han C."/>
            <person name="Kuske C.R."/>
            <person name="Schmutz J."/>
            <person name="Larimer F."/>
            <person name="Land M."/>
            <person name="Hauser L."/>
            <person name="Kyrpides N."/>
            <person name="Mikhailova N."/>
            <person name="Vishnivetskaya T."/>
            <person name="Rodrigues D.F."/>
            <person name="Gilichinsky D."/>
            <person name="Tiedje J."/>
            <person name="Richardson P."/>
        </authorList>
    </citation>
    <scope>NUCLEOTIDE SEQUENCE [LARGE SCALE GENOMIC DNA]</scope>
    <source>
        <strain>DSM 17290 / CCUG 55495 / CIP 109462 / JCM 13490 / 255-15</strain>
    </source>
</reference>
<dbReference type="EC" id="5.4.2.7" evidence="1"/>
<dbReference type="EMBL" id="CP001022">
    <property type="protein sequence ID" value="ACB60482.1"/>
    <property type="molecule type" value="Genomic_DNA"/>
</dbReference>
<dbReference type="RefSeq" id="WP_012369905.1">
    <property type="nucleotide sequence ID" value="NC_010556.1"/>
</dbReference>
<dbReference type="SMR" id="B1YM95"/>
<dbReference type="STRING" id="262543.Exig_1002"/>
<dbReference type="KEGG" id="esi:Exig_1002"/>
<dbReference type="eggNOG" id="COG1015">
    <property type="taxonomic scope" value="Bacteria"/>
</dbReference>
<dbReference type="HOGENOM" id="CLU_053861_0_0_9"/>
<dbReference type="OrthoDB" id="9769930at2"/>
<dbReference type="UniPathway" id="UPA00002">
    <property type="reaction ID" value="UER00467"/>
</dbReference>
<dbReference type="Proteomes" id="UP000001681">
    <property type="component" value="Chromosome"/>
</dbReference>
<dbReference type="GO" id="GO:0005829">
    <property type="term" value="C:cytosol"/>
    <property type="evidence" value="ECO:0007669"/>
    <property type="project" value="TreeGrafter"/>
</dbReference>
<dbReference type="GO" id="GO:0000287">
    <property type="term" value="F:magnesium ion binding"/>
    <property type="evidence" value="ECO:0007669"/>
    <property type="project" value="InterPro"/>
</dbReference>
<dbReference type="GO" id="GO:0030145">
    <property type="term" value="F:manganese ion binding"/>
    <property type="evidence" value="ECO:0007669"/>
    <property type="project" value="UniProtKB-UniRule"/>
</dbReference>
<dbReference type="GO" id="GO:0008973">
    <property type="term" value="F:phosphopentomutase activity"/>
    <property type="evidence" value="ECO:0007669"/>
    <property type="project" value="UniProtKB-UniRule"/>
</dbReference>
<dbReference type="GO" id="GO:0006018">
    <property type="term" value="P:2-deoxyribose 1-phosphate catabolic process"/>
    <property type="evidence" value="ECO:0007669"/>
    <property type="project" value="UniProtKB-UniRule"/>
</dbReference>
<dbReference type="GO" id="GO:0006015">
    <property type="term" value="P:5-phosphoribose 1-diphosphate biosynthetic process"/>
    <property type="evidence" value="ECO:0007669"/>
    <property type="project" value="UniProtKB-UniPathway"/>
</dbReference>
<dbReference type="GO" id="GO:0043094">
    <property type="term" value="P:metabolic compound salvage"/>
    <property type="evidence" value="ECO:0007669"/>
    <property type="project" value="InterPro"/>
</dbReference>
<dbReference type="GO" id="GO:0009117">
    <property type="term" value="P:nucleotide metabolic process"/>
    <property type="evidence" value="ECO:0007669"/>
    <property type="project" value="InterPro"/>
</dbReference>
<dbReference type="CDD" id="cd16009">
    <property type="entry name" value="PPM"/>
    <property type="match status" value="1"/>
</dbReference>
<dbReference type="FunFam" id="3.30.70.1250:FF:000001">
    <property type="entry name" value="Phosphopentomutase"/>
    <property type="match status" value="1"/>
</dbReference>
<dbReference type="Gene3D" id="3.40.720.10">
    <property type="entry name" value="Alkaline Phosphatase, subunit A"/>
    <property type="match status" value="1"/>
</dbReference>
<dbReference type="Gene3D" id="3.30.70.1250">
    <property type="entry name" value="Phosphopentomutase"/>
    <property type="match status" value="1"/>
</dbReference>
<dbReference type="HAMAP" id="MF_00740">
    <property type="entry name" value="Phosphopentomut"/>
    <property type="match status" value="1"/>
</dbReference>
<dbReference type="InterPro" id="IPR017850">
    <property type="entry name" value="Alkaline_phosphatase_core_sf"/>
</dbReference>
<dbReference type="InterPro" id="IPR010045">
    <property type="entry name" value="DeoB"/>
</dbReference>
<dbReference type="InterPro" id="IPR006124">
    <property type="entry name" value="Metalloenzyme"/>
</dbReference>
<dbReference type="InterPro" id="IPR024052">
    <property type="entry name" value="Phosphopentomutase_DeoB_cap_sf"/>
</dbReference>
<dbReference type="NCBIfam" id="TIGR01696">
    <property type="entry name" value="deoB"/>
    <property type="match status" value="1"/>
</dbReference>
<dbReference type="NCBIfam" id="NF003766">
    <property type="entry name" value="PRK05362.1"/>
    <property type="match status" value="1"/>
</dbReference>
<dbReference type="PANTHER" id="PTHR21110">
    <property type="entry name" value="PHOSPHOPENTOMUTASE"/>
    <property type="match status" value="1"/>
</dbReference>
<dbReference type="PANTHER" id="PTHR21110:SF0">
    <property type="entry name" value="PHOSPHOPENTOMUTASE"/>
    <property type="match status" value="1"/>
</dbReference>
<dbReference type="Pfam" id="PF01676">
    <property type="entry name" value="Metalloenzyme"/>
    <property type="match status" value="1"/>
</dbReference>
<dbReference type="PIRSF" id="PIRSF001491">
    <property type="entry name" value="Ppentomutase"/>
    <property type="match status" value="1"/>
</dbReference>
<dbReference type="SUPFAM" id="SSF53649">
    <property type="entry name" value="Alkaline phosphatase-like"/>
    <property type="match status" value="1"/>
</dbReference>
<dbReference type="SUPFAM" id="SSF143856">
    <property type="entry name" value="DeoB insert domain-like"/>
    <property type="match status" value="1"/>
</dbReference>
<accession>B1YM95</accession>
<keyword id="KW-0963">Cytoplasm</keyword>
<keyword id="KW-0413">Isomerase</keyword>
<keyword id="KW-0464">Manganese</keyword>
<keyword id="KW-0479">Metal-binding</keyword>
<keyword id="KW-1185">Reference proteome</keyword>
<organism>
    <name type="scientific">Exiguobacterium sibiricum (strain DSM 17290 / CCUG 55495 / CIP 109462 / JCM 13490 / 255-15)</name>
    <dbReference type="NCBI Taxonomy" id="262543"/>
    <lineage>
        <taxon>Bacteria</taxon>
        <taxon>Bacillati</taxon>
        <taxon>Bacillota</taxon>
        <taxon>Bacilli</taxon>
        <taxon>Bacillales</taxon>
        <taxon>Bacillales Family XII. Incertae Sedis</taxon>
        <taxon>Exiguobacterium</taxon>
    </lineage>
</organism>
<protein>
    <recommendedName>
        <fullName evidence="1">Phosphopentomutase</fullName>
        <ecNumber evidence="1">5.4.2.7</ecNumber>
    </recommendedName>
    <alternativeName>
        <fullName evidence="1">Phosphodeoxyribomutase</fullName>
    </alternativeName>
</protein>